<evidence type="ECO:0000255" key="1">
    <source>
        <dbReference type="HAMAP-Rule" id="MF_00262"/>
    </source>
</evidence>
<keyword id="KW-0131">Cell cycle</keyword>
<keyword id="KW-0132">Cell division</keyword>
<keyword id="KW-1185">Reference proteome</keyword>
<protein>
    <recommendedName>
        <fullName evidence="1">Cell division topological specificity factor</fullName>
    </recommendedName>
</protein>
<gene>
    <name evidence="1" type="primary">minE</name>
    <name type="ordered locus">PP_1732</name>
</gene>
<accession>Q88M43</accession>
<name>MINE_PSEPK</name>
<sequence length="84" mass="9709">MNLFDFFRGRQKQTSASVAKERLQIIVAHERGQRSEPDYLPALQKELLEVIRKYVNIGNDDVHIELENQGSCSILELNITLPDR</sequence>
<organism>
    <name type="scientific">Pseudomonas putida (strain ATCC 47054 / DSM 6125 / CFBP 8728 / NCIMB 11950 / KT2440)</name>
    <dbReference type="NCBI Taxonomy" id="160488"/>
    <lineage>
        <taxon>Bacteria</taxon>
        <taxon>Pseudomonadati</taxon>
        <taxon>Pseudomonadota</taxon>
        <taxon>Gammaproteobacteria</taxon>
        <taxon>Pseudomonadales</taxon>
        <taxon>Pseudomonadaceae</taxon>
        <taxon>Pseudomonas</taxon>
    </lineage>
</organism>
<dbReference type="EMBL" id="AE015451">
    <property type="protein sequence ID" value="AAN67352.1"/>
    <property type="molecule type" value="Genomic_DNA"/>
</dbReference>
<dbReference type="RefSeq" id="NP_743888.1">
    <property type="nucleotide sequence ID" value="NC_002947.4"/>
</dbReference>
<dbReference type="RefSeq" id="WP_003252572.1">
    <property type="nucleotide sequence ID" value="NZ_CP169744.1"/>
</dbReference>
<dbReference type="SMR" id="Q88M43"/>
<dbReference type="STRING" id="160488.PP_1732"/>
<dbReference type="PaxDb" id="160488-PP_1732"/>
<dbReference type="GeneID" id="97166789"/>
<dbReference type="KEGG" id="ppu:PP_1732"/>
<dbReference type="PATRIC" id="fig|160488.4.peg.1826"/>
<dbReference type="eggNOG" id="COG0851">
    <property type="taxonomic scope" value="Bacteria"/>
</dbReference>
<dbReference type="HOGENOM" id="CLU_137929_2_1_6"/>
<dbReference type="OrthoDB" id="9802655at2"/>
<dbReference type="PhylomeDB" id="Q88M43"/>
<dbReference type="BioCyc" id="PPUT160488:G1G01-1833-MONOMER"/>
<dbReference type="Proteomes" id="UP000000556">
    <property type="component" value="Chromosome"/>
</dbReference>
<dbReference type="GO" id="GO:0051301">
    <property type="term" value="P:cell division"/>
    <property type="evidence" value="ECO:0007669"/>
    <property type="project" value="UniProtKB-KW"/>
</dbReference>
<dbReference type="GO" id="GO:0032955">
    <property type="term" value="P:regulation of division septum assembly"/>
    <property type="evidence" value="ECO:0007669"/>
    <property type="project" value="InterPro"/>
</dbReference>
<dbReference type="FunFam" id="3.30.1070.10:FF:000001">
    <property type="entry name" value="Cell division topological specificity factor"/>
    <property type="match status" value="1"/>
</dbReference>
<dbReference type="Gene3D" id="3.30.1070.10">
    <property type="entry name" value="Cell division topological specificity factor MinE"/>
    <property type="match status" value="1"/>
</dbReference>
<dbReference type="HAMAP" id="MF_00262">
    <property type="entry name" value="MinE"/>
    <property type="match status" value="1"/>
</dbReference>
<dbReference type="InterPro" id="IPR005527">
    <property type="entry name" value="MinE"/>
</dbReference>
<dbReference type="InterPro" id="IPR036707">
    <property type="entry name" value="MinE_sf"/>
</dbReference>
<dbReference type="NCBIfam" id="TIGR01215">
    <property type="entry name" value="minE"/>
    <property type="match status" value="1"/>
</dbReference>
<dbReference type="NCBIfam" id="NF001422">
    <property type="entry name" value="PRK00296.1"/>
    <property type="match status" value="1"/>
</dbReference>
<dbReference type="NCBIfam" id="NF010595">
    <property type="entry name" value="PRK13989.1"/>
    <property type="match status" value="1"/>
</dbReference>
<dbReference type="Pfam" id="PF03776">
    <property type="entry name" value="MinE"/>
    <property type="match status" value="1"/>
</dbReference>
<dbReference type="SUPFAM" id="SSF55229">
    <property type="entry name" value="Cell division protein MinE topological specificity domain"/>
    <property type="match status" value="1"/>
</dbReference>
<feature type="chain" id="PRO_0000205883" description="Cell division topological specificity factor">
    <location>
        <begin position="1"/>
        <end position="84"/>
    </location>
</feature>
<comment type="function">
    <text evidence="1">Prevents the cell division inhibition by proteins MinC and MinD at internal division sites while permitting inhibition at polar sites. This ensures cell division at the proper site by restricting the formation of a division septum at the midpoint of the long axis of the cell.</text>
</comment>
<comment type="similarity">
    <text evidence="1">Belongs to the MinE family.</text>
</comment>
<reference key="1">
    <citation type="journal article" date="2002" name="Environ. Microbiol.">
        <title>Complete genome sequence and comparative analysis of the metabolically versatile Pseudomonas putida KT2440.</title>
        <authorList>
            <person name="Nelson K.E."/>
            <person name="Weinel C."/>
            <person name="Paulsen I.T."/>
            <person name="Dodson R.J."/>
            <person name="Hilbert H."/>
            <person name="Martins dos Santos V.A.P."/>
            <person name="Fouts D.E."/>
            <person name="Gill S.R."/>
            <person name="Pop M."/>
            <person name="Holmes M."/>
            <person name="Brinkac L.M."/>
            <person name="Beanan M.J."/>
            <person name="DeBoy R.T."/>
            <person name="Daugherty S.C."/>
            <person name="Kolonay J.F."/>
            <person name="Madupu R."/>
            <person name="Nelson W.C."/>
            <person name="White O."/>
            <person name="Peterson J.D."/>
            <person name="Khouri H.M."/>
            <person name="Hance I."/>
            <person name="Chris Lee P."/>
            <person name="Holtzapple E.K."/>
            <person name="Scanlan D."/>
            <person name="Tran K."/>
            <person name="Moazzez A."/>
            <person name="Utterback T.R."/>
            <person name="Rizzo M."/>
            <person name="Lee K."/>
            <person name="Kosack D."/>
            <person name="Moestl D."/>
            <person name="Wedler H."/>
            <person name="Lauber J."/>
            <person name="Stjepandic D."/>
            <person name="Hoheisel J."/>
            <person name="Straetz M."/>
            <person name="Heim S."/>
            <person name="Kiewitz C."/>
            <person name="Eisen J.A."/>
            <person name="Timmis K.N."/>
            <person name="Duesterhoeft A."/>
            <person name="Tuemmler B."/>
            <person name="Fraser C.M."/>
        </authorList>
    </citation>
    <scope>NUCLEOTIDE SEQUENCE [LARGE SCALE GENOMIC DNA]</scope>
    <source>
        <strain>ATCC 47054 / DSM 6125 / CFBP 8728 / NCIMB 11950 / KT2440</strain>
    </source>
</reference>
<proteinExistence type="inferred from homology"/>